<protein>
    <recommendedName>
        <fullName>Disintegrin and metalloproteinase domain-containing protein 12</fullName>
        <shortName>ADAM 12</shortName>
        <ecNumber>3.4.24.-</ecNumber>
    </recommendedName>
    <alternativeName>
        <fullName>Meltrin-alpha</fullName>
    </alternativeName>
</protein>
<dbReference type="EC" id="3.4.24.-"/>
<dbReference type="EMBL" id="D50411">
    <property type="protein sequence ID" value="BAA08912.1"/>
    <property type="molecule type" value="mRNA"/>
</dbReference>
<dbReference type="EMBL" id="AC125372">
    <property type="status" value="NOT_ANNOTATED_CDS"/>
    <property type="molecule type" value="Genomic_DNA"/>
</dbReference>
<dbReference type="EMBL" id="AC126676">
    <property type="status" value="NOT_ANNOTATED_CDS"/>
    <property type="molecule type" value="Genomic_DNA"/>
</dbReference>
<dbReference type="EMBL" id="AC140055">
    <property type="status" value="NOT_ANNOTATED_CDS"/>
    <property type="molecule type" value="Genomic_DNA"/>
</dbReference>
<dbReference type="CCDS" id="CCDS21938.1"/>
<dbReference type="PIR" id="S60257">
    <property type="entry name" value="S60257"/>
</dbReference>
<dbReference type="RefSeq" id="NP_031426.2">
    <property type="nucleotide sequence ID" value="NM_007400.3"/>
</dbReference>
<dbReference type="SMR" id="Q61824"/>
<dbReference type="BioGRID" id="197962">
    <property type="interactions" value="14"/>
</dbReference>
<dbReference type="FunCoup" id="Q61824">
    <property type="interactions" value="577"/>
</dbReference>
<dbReference type="IntAct" id="Q61824">
    <property type="interactions" value="1"/>
</dbReference>
<dbReference type="MINT" id="Q61824"/>
<dbReference type="STRING" id="10090.ENSMUSP00000065213"/>
<dbReference type="MEROPS" id="M12.212"/>
<dbReference type="GlyCosmos" id="Q61824">
    <property type="glycosylation" value="7 sites, No reported glycans"/>
</dbReference>
<dbReference type="GlyGen" id="Q61824">
    <property type="glycosylation" value="7 sites, 2 N-linked glycans (2 sites)"/>
</dbReference>
<dbReference type="iPTMnet" id="Q61824"/>
<dbReference type="PhosphoSitePlus" id="Q61824"/>
<dbReference type="PaxDb" id="10090-ENSMUSP00000065213"/>
<dbReference type="ProteomicsDB" id="285602"/>
<dbReference type="Antibodypedia" id="19223">
    <property type="antibodies" value="458 antibodies from 40 providers"/>
</dbReference>
<dbReference type="DNASU" id="11489"/>
<dbReference type="Ensembl" id="ENSMUST00000067680.11">
    <property type="protein sequence ID" value="ENSMUSP00000065213.5"/>
    <property type="gene ID" value="ENSMUSG00000054555.12"/>
</dbReference>
<dbReference type="GeneID" id="11489"/>
<dbReference type="KEGG" id="mmu:11489"/>
<dbReference type="UCSC" id="uc009kdo.2">
    <property type="organism name" value="mouse"/>
</dbReference>
<dbReference type="AGR" id="MGI:105378"/>
<dbReference type="CTD" id="8038"/>
<dbReference type="MGI" id="MGI:105378">
    <property type="gene designation" value="Adam12"/>
</dbReference>
<dbReference type="VEuPathDB" id="HostDB:ENSMUSG00000054555"/>
<dbReference type="eggNOG" id="KOG3607">
    <property type="taxonomic scope" value="Eukaryota"/>
</dbReference>
<dbReference type="GeneTree" id="ENSGT00940000155495"/>
<dbReference type="HOGENOM" id="CLU_012714_7_0_1"/>
<dbReference type="InParanoid" id="Q61824"/>
<dbReference type="OMA" id="FAKCEIR"/>
<dbReference type="OrthoDB" id="5951731at2759"/>
<dbReference type="PhylomeDB" id="Q61824"/>
<dbReference type="TreeFam" id="TF314733"/>
<dbReference type="BRENDA" id="3.4.24.B10">
    <property type="organism ID" value="3474"/>
</dbReference>
<dbReference type="Reactome" id="R-MMU-8941237">
    <property type="pathway name" value="Invadopodia formation"/>
</dbReference>
<dbReference type="BioGRID-ORCS" id="11489">
    <property type="hits" value="3 hits in 79 CRISPR screens"/>
</dbReference>
<dbReference type="ChiTaRS" id="Adam12">
    <property type="organism name" value="mouse"/>
</dbReference>
<dbReference type="PRO" id="PR:Q61824"/>
<dbReference type="Proteomes" id="UP000000589">
    <property type="component" value="Chromosome 7"/>
</dbReference>
<dbReference type="RNAct" id="Q61824">
    <property type="molecule type" value="protein"/>
</dbReference>
<dbReference type="Bgee" id="ENSMUSG00000054555">
    <property type="expression patterns" value="Expressed in hindlimb mesenchyme and 209 other cell types or tissues"/>
</dbReference>
<dbReference type="ExpressionAtlas" id="Q61824">
    <property type="expression patterns" value="baseline and differential"/>
</dbReference>
<dbReference type="GO" id="GO:0005654">
    <property type="term" value="C:nucleoplasm"/>
    <property type="evidence" value="ECO:0007669"/>
    <property type="project" value="Ensembl"/>
</dbReference>
<dbReference type="GO" id="GO:0005886">
    <property type="term" value="C:plasma membrane"/>
    <property type="evidence" value="ECO:0000304"/>
    <property type="project" value="Reactome"/>
</dbReference>
<dbReference type="GO" id="GO:0046872">
    <property type="term" value="F:metal ion binding"/>
    <property type="evidence" value="ECO:0007669"/>
    <property type="project" value="UniProtKB-KW"/>
</dbReference>
<dbReference type="GO" id="GO:0004222">
    <property type="term" value="F:metalloendopeptidase activity"/>
    <property type="evidence" value="ECO:0007669"/>
    <property type="project" value="InterPro"/>
</dbReference>
<dbReference type="GO" id="GO:0017124">
    <property type="term" value="F:SH3 domain binding"/>
    <property type="evidence" value="ECO:0007669"/>
    <property type="project" value="UniProtKB-KW"/>
</dbReference>
<dbReference type="GO" id="GO:0007155">
    <property type="term" value="P:cell adhesion"/>
    <property type="evidence" value="ECO:0007669"/>
    <property type="project" value="UniProtKB-KW"/>
</dbReference>
<dbReference type="GO" id="GO:0006508">
    <property type="term" value="P:proteolysis"/>
    <property type="evidence" value="ECO:0007669"/>
    <property type="project" value="UniProtKB-KW"/>
</dbReference>
<dbReference type="CDD" id="cd04269">
    <property type="entry name" value="ZnMc_adamalysin_II_like"/>
    <property type="match status" value="1"/>
</dbReference>
<dbReference type="FunFam" id="3.40.390.10:FF:000002">
    <property type="entry name" value="Disintegrin and metalloproteinase domain-containing protein 22"/>
    <property type="match status" value="1"/>
</dbReference>
<dbReference type="FunFam" id="4.10.70.10:FF:000001">
    <property type="entry name" value="Disintegrin and metalloproteinase domain-containing protein 22"/>
    <property type="match status" value="1"/>
</dbReference>
<dbReference type="Gene3D" id="3.40.390.10">
    <property type="entry name" value="Collagenase (Catalytic Domain)"/>
    <property type="match status" value="1"/>
</dbReference>
<dbReference type="Gene3D" id="4.10.70.10">
    <property type="entry name" value="Disintegrin domain"/>
    <property type="match status" value="1"/>
</dbReference>
<dbReference type="InterPro" id="IPR006586">
    <property type="entry name" value="ADAM_Cys-rich"/>
</dbReference>
<dbReference type="InterPro" id="IPR018358">
    <property type="entry name" value="Disintegrin_CS"/>
</dbReference>
<dbReference type="InterPro" id="IPR001762">
    <property type="entry name" value="Disintegrin_dom"/>
</dbReference>
<dbReference type="InterPro" id="IPR036436">
    <property type="entry name" value="Disintegrin_dom_sf"/>
</dbReference>
<dbReference type="InterPro" id="IPR000742">
    <property type="entry name" value="EGF-like_dom"/>
</dbReference>
<dbReference type="InterPro" id="IPR024079">
    <property type="entry name" value="MetalloPept_cat_dom_sf"/>
</dbReference>
<dbReference type="InterPro" id="IPR001590">
    <property type="entry name" value="Peptidase_M12B"/>
</dbReference>
<dbReference type="InterPro" id="IPR002870">
    <property type="entry name" value="Peptidase_M12B_N"/>
</dbReference>
<dbReference type="InterPro" id="IPR034027">
    <property type="entry name" value="Reprolysin_adamalysin"/>
</dbReference>
<dbReference type="PANTHER" id="PTHR11905">
    <property type="entry name" value="ADAM A DISINTEGRIN AND METALLOPROTEASE DOMAIN"/>
    <property type="match status" value="1"/>
</dbReference>
<dbReference type="PANTHER" id="PTHR11905:SF112">
    <property type="entry name" value="DISINTEGRIN AND METALLOPROTEINASE DOMAIN-CONTAINING PROTEIN 12"/>
    <property type="match status" value="1"/>
</dbReference>
<dbReference type="Pfam" id="PF08516">
    <property type="entry name" value="ADAM_CR"/>
    <property type="match status" value="1"/>
</dbReference>
<dbReference type="Pfam" id="PF00200">
    <property type="entry name" value="Disintegrin"/>
    <property type="match status" value="1"/>
</dbReference>
<dbReference type="Pfam" id="PF01562">
    <property type="entry name" value="Pep_M12B_propep"/>
    <property type="match status" value="1"/>
</dbReference>
<dbReference type="Pfam" id="PF01421">
    <property type="entry name" value="Reprolysin"/>
    <property type="match status" value="1"/>
</dbReference>
<dbReference type="PRINTS" id="PR00289">
    <property type="entry name" value="DISINTEGRIN"/>
</dbReference>
<dbReference type="SMART" id="SM00608">
    <property type="entry name" value="ACR"/>
    <property type="match status" value="1"/>
</dbReference>
<dbReference type="SMART" id="SM00050">
    <property type="entry name" value="DISIN"/>
    <property type="match status" value="1"/>
</dbReference>
<dbReference type="SUPFAM" id="SSF57552">
    <property type="entry name" value="Blood coagulation inhibitor (disintegrin)"/>
    <property type="match status" value="1"/>
</dbReference>
<dbReference type="SUPFAM" id="SSF55486">
    <property type="entry name" value="Metalloproteases ('zincins'), catalytic domain"/>
    <property type="match status" value="1"/>
</dbReference>
<dbReference type="PROSITE" id="PS50215">
    <property type="entry name" value="ADAM_MEPRO"/>
    <property type="match status" value="1"/>
</dbReference>
<dbReference type="PROSITE" id="PS00427">
    <property type="entry name" value="DISINTEGRIN_1"/>
    <property type="match status" value="1"/>
</dbReference>
<dbReference type="PROSITE" id="PS50214">
    <property type="entry name" value="DISINTEGRIN_2"/>
    <property type="match status" value="1"/>
</dbReference>
<dbReference type="PROSITE" id="PS50026">
    <property type="entry name" value="EGF_3"/>
    <property type="match status" value="1"/>
</dbReference>
<dbReference type="PROSITE" id="PS00142">
    <property type="entry name" value="ZINC_PROTEASE"/>
    <property type="match status" value="1"/>
</dbReference>
<reference key="1">
    <citation type="journal article" date="1995" name="Nature">
        <title>A metalloprotease-disintegrin participating in myoblast fusion.</title>
        <authorList>
            <person name="Yagami-Hiromasa T."/>
            <person name="Sato T."/>
            <person name="Kurisaki T."/>
            <person name="Kamijo K."/>
            <person name="Nabeshima Y."/>
            <person name="Fujisawa-Sehara A."/>
        </authorList>
    </citation>
    <scope>NUCLEOTIDE SEQUENCE [MRNA]</scope>
    <source>
        <tissue>Embryonic fibroblast</tissue>
    </source>
</reference>
<reference key="2">
    <citation type="journal article" date="2009" name="PLoS Biol.">
        <title>Lineage-specific biology revealed by a finished genome assembly of the mouse.</title>
        <authorList>
            <person name="Church D.M."/>
            <person name="Goodstadt L."/>
            <person name="Hillier L.W."/>
            <person name="Zody M.C."/>
            <person name="Goldstein S."/>
            <person name="She X."/>
            <person name="Bult C.J."/>
            <person name="Agarwala R."/>
            <person name="Cherry J.L."/>
            <person name="DiCuccio M."/>
            <person name="Hlavina W."/>
            <person name="Kapustin Y."/>
            <person name="Meric P."/>
            <person name="Maglott D."/>
            <person name="Birtle Z."/>
            <person name="Marques A.C."/>
            <person name="Graves T."/>
            <person name="Zhou S."/>
            <person name="Teague B."/>
            <person name="Potamousis K."/>
            <person name="Churas C."/>
            <person name="Place M."/>
            <person name="Herschleb J."/>
            <person name="Runnheim R."/>
            <person name="Forrest D."/>
            <person name="Amos-Landgraf J."/>
            <person name="Schwartz D.C."/>
            <person name="Cheng Z."/>
            <person name="Lindblad-Toh K."/>
            <person name="Eichler E.E."/>
            <person name="Ponting C.P."/>
        </authorList>
    </citation>
    <scope>NUCLEOTIDE SEQUENCE [LARGE SCALE GENOMIC DNA]</scope>
    <source>
        <strain>C57BL/6J</strain>
    </source>
</reference>
<reference key="3">
    <citation type="journal article" date="1998" name="Mech. Dev.">
        <title>Spatially- and temporally-restricted expression of meltrin alpha (ADAM12) and beta (ADAM19) in mouse embryo.</title>
        <authorList>
            <person name="Kurisaki T."/>
            <person name="Masuda A."/>
            <person name="Osumi N."/>
            <person name="Nabeshima Y."/>
            <person name="Fujisawa-Sehara A."/>
        </authorList>
    </citation>
    <scope>TISSUE SPECIFICITY</scope>
</reference>
<reference key="4">
    <citation type="journal article" date="2000" name="J. Biol. Chem.">
        <title>Binding of ADAM12, a marker of skeletal muscle regeneration, to the muscle-specific actin-binding protein, alpha-actinin-2, is required for myoblast fusion.</title>
        <authorList>
            <person name="Galliano M.-F."/>
            <person name="Huet C."/>
            <person name="Frygelius J."/>
            <person name="Polgren A."/>
            <person name="Wewer U.M."/>
            <person name="Engvall E."/>
        </authorList>
    </citation>
    <scope>INTERACTION WITH ALPHA-ACTININ-2</scope>
</reference>
<reference key="5">
    <citation type="journal article" date="2000" name="Oncogene">
        <title>Meltrin alpha cytoplasmic domain interacts with SH3 domains of Src and Grb2 and is phosphorylated by v-Src.</title>
        <authorList>
            <person name="Suzuki A."/>
            <person name="Kadota N."/>
            <person name="Hara T."/>
            <person name="Nakagami Y."/>
            <person name="Izumi T."/>
            <person name="Takenawa T."/>
            <person name="Sabe H."/>
            <person name="Endo T."/>
        </authorList>
    </citation>
    <scope>PHOSPHORYLATION AT TYR-901</scope>
</reference>
<sequence length="903" mass="98504">MAERPARRAPPARALLLALAGALLAPRAARGMSLWDQRGTYEVARASLLSKDPGIPGQSIPAKDHPDVLTVQLQLESRDLILSLERNEGLIANGFTETHYLQDGTDVSLTRNHTDHCYYHGHVQGDAASVVSLSTCSGLRGLIMFENKTYSLEPMKNTTDSYKLVPAESMTNIQGLCGSQHNKSNLTMEDVSPGTSQMRARRHKRETLKMTKYVELVIVADNREFQRQGKDLEKVKQRLIEIANHVDKFYRPLNIRIVLVGVEVWNDIDKCSISQDPFTSLHEFLDWRKIKLLPRKSHDNAQLISGVYFQGTTIGMAPIMSMCTAEQSGGVVMDHSDSPLGAAVTLAHELGHNFGMNHDTLERGCSCRMAAEKGGCIMNPSTGFPFPMVFSSCSRKDLEASLEKGMGMCLFNLPEVKQAFGGRKCGNGYVEEGEECDCGEPEECTNRCCNATTCTLKPDAVCAHGQCCEDCQLKPPGTACRGSSNSCDLPEFCTGTAPHCPANVYLHDGHPCQGVDGYCYNGICQTHEQQCVTLWGPGAKPAPGICFERVNSAGDPYGNCGKDSKSAFAKCELRDAKCGKIQCQGGASRPVIGTNAVSIETNIPQQEGGRILCRGTHVYLGDDMPDPGLVLAGTKCAEGKICLNRRCQNISVFGVHKCAMQCHGRGVCNNRKNCHCEAHWAPPFCDKFGFGGSTDSGPIRQADNQGLTVGILVSILCLLAAGFVVYLKRKTLMRLLFTHKKTTMEKLRCVHPSRTPSGPHLGQAHHTPGKGLLMNRAPHFNTPKDRHSLKCQNMDISRPLDARAVPQLQSPQRVLLPLHQTPRAPSGPARPLPASPAVRQAQGIRKPSPPQKPLPADPLSRTSRLTSALVRTPGQQEPGHRPAPIRPAPKHQVPRPSHNAYIK</sequence>
<feature type="signal peptide" evidence="2">
    <location>
        <begin position="1"/>
        <end position="31"/>
    </location>
</feature>
<feature type="propeptide" id="PRO_0000029080" evidence="1">
    <location>
        <begin position="32"/>
        <end position="205"/>
    </location>
</feature>
<feature type="chain" id="PRO_0000029081" description="Disintegrin and metalloproteinase domain-containing protein 12">
    <location>
        <begin position="206"/>
        <end position="903"/>
    </location>
</feature>
<feature type="topological domain" description="Extracellular" evidence="2">
    <location>
        <begin position="206"/>
        <end position="706"/>
    </location>
</feature>
<feature type="transmembrane region" description="Helical" evidence="2">
    <location>
        <begin position="707"/>
        <end position="727"/>
    </location>
</feature>
<feature type="topological domain" description="Cytoplasmic" evidence="2">
    <location>
        <begin position="728"/>
        <end position="903"/>
    </location>
</feature>
<feature type="domain" description="Peptidase M12B" evidence="5">
    <location>
        <begin position="212"/>
        <end position="414"/>
    </location>
</feature>
<feature type="domain" description="Disintegrin" evidence="3">
    <location>
        <begin position="422"/>
        <end position="508"/>
    </location>
</feature>
<feature type="domain" description="EGF-like" evidence="4">
    <location>
        <begin position="654"/>
        <end position="686"/>
    </location>
</feature>
<feature type="region of interest" description="Disordered" evidence="7">
    <location>
        <begin position="753"/>
        <end position="790"/>
    </location>
</feature>
<feature type="region of interest" description="Disordered" evidence="7">
    <location>
        <begin position="819"/>
        <end position="903"/>
    </location>
</feature>
<feature type="short sequence motif" description="Cysteine switch" evidence="1">
    <location>
        <begin position="175"/>
        <end position="182"/>
    </location>
</feature>
<feature type="short sequence motif" description="SH3-binding; class II">
    <location>
        <begin position="824"/>
        <end position="830"/>
    </location>
</feature>
<feature type="short sequence motif" description="SH3-binding; class I">
    <location>
        <begin position="830"/>
        <end position="837"/>
    </location>
</feature>
<feature type="short sequence motif" description="SH3-binding; class II">
    <location>
        <begin position="846"/>
        <end position="852"/>
    </location>
</feature>
<feature type="short sequence motif" description="SH3-binding; class I">
    <location>
        <begin position="852"/>
        <end position="858"/>
    </location>
</feature>
<feature type="short sequence motif" description="SH3-binding; class I">
    <location>
        <begin position="881"/>
        <end position="887"/>
    </location>
</feature>
<feature type="compositionally biased region" description="Pro residues" evidence="7">
    <location>
        <begin position="847"/>
        <end position="856"/>
    </location>
</feature>
<feature type="active site" evidence="5 6">
    <location>
        <position position="349"/>
    </location>
</feature>
<feature type="binding site" description="in inhibited form" evidence="1">
    <location>
        <position position="177"/>
    </location>
    <ligand>
        <name>Zn(2+)</name>
        <dbReference type="ChEBI" id="CHEBI:29105"/>
        <note>catalytic</note>
    </ligand>
</feature>
<feature type="binding site" evidence="1">
    <location>
        <position position="348"/>
    </location>
    <ligand>
        <name>Zn(2+)</name>
        <dbReference type="ChEBI" id="CHEBI:29105"/>
        <note>catalytic</note>
    </ligand>
</feature>
<feature type="binding site" evidence="1">
    <location>
        <position position="352"/>
    </location>
    <ligand>
        <name>Zn(2+)</name>
        <dbReference type="ChEBI" id="CHEBI:29105"/>
        <note>catalytic</note>
    </ligand>
</feature>
<feature type="binding site" evidence="1">
    <location>
        <position position="358"/>
    </location>
    <ligand>
        <name>Zn(2+)</name>
        <dbReference type="ChEBI" id="CHEBI:29105"/>
        <note>catalytic</note>
    </ligand>
</feature>
<feature type="modified residue" description="Phosphotyrosine; by SRC" evidence="10">
    <location>
        <position position="901"/>
    </location>
</feature>
<feature type="glycosylation site" description="N-linked (GlcNAc...) asparagine" evidence="2">
    <location>
        <position position="112"/>
    </location>
</feature>
<feature type="glycosylation site" description="N-linked (GlcNAc...) asparagine" evidence="2">
    <location>
        <position position="147"/>
    </location>
</feature>
<feature type="glycosylation site" description="N-linked (GlcNAc...) asparagine" evidence="2">
    <location>
        <position position="157"/>
    </location>
</feature>
<feature type="glycosylation site" description="N-linked (GlcNAc...) asparagine" evidence="2">
    <location>
        <position position="182"/>
    </location>
</feature>
<feature type="glycosylation site" description="N-linked (GlcNAc...) asparagine" evidence="2">
    <location>
        <position position="185"/>
    </location>
</feature>
<feature type="glycosylation site" description="N-linked (GlcNAc...) asparagine" evidence="2">
    <location>
        <position position="450"/>
    </location>
</feature>
<feature type="glycosylation site" description="N-linked (GlcNAc...) asparagine" evidence="2">
    <location>
        <position position="649"/>
    </location>
</feature>
<feature type="disulfide bond" evidence="1">
    <location>
        <begin position="323"/>
        <end position="409"/>
    </location>
</feature>
<feature type="disulfide bond" evidence="1">
    <location>
        <begin position="365"/>
        <end position="393"/>
    </location>
</feature>
<feature type="disulfide bond" evidence="1">
    <location>
        <begin position="367"/>
        <end position="376"/>
    </location>
</feature>
<feature type="disulfide bond" evidence="1">
    <location>
        <begin position="480"/>
        <end position="500"/>
    </location>
</feature>
<feature type="disulfide bond" evidence="1">
    <location>
        <begin position="658"/>
        <end position="668"/>
    </location>
</feature>
<feature type="disulfide bond" evidence="1">
    <location>
        <begin position="662"/>
        <end position="674"/>
    </location>
</feature>
<feature type="disulfide bond" evidence="1">
    <location>
        <begin position="676"/>
        <end position="685"/>
    </location>
</feature>
<feature type="sequence conflict" description="In Ref. 1; BAA08912." evidence="9" ref="1">
    <original>T</original>
    <variation>A</variation>
    <location>
        <position position="40"/>
    </location>
</feature>
<feature type="sequence conflict" description="In Ref. 1; BAA08912." evidence="9" ref="1">
    <original>G</original>
    <variation>D</variation>
    <location>
        <position position="138"/>
    </location>
</feature>
<feature type="sequence conflict" description="In Ref. 1; BAA08912." evidence="9" ref="1">
    <original>S</original>
    <variation>R</variation>
    <location>
        <position position="280"/>
    </location>
</feature>
<gene>
    <name type="primary">Adam12</name>
    <name type="synonym">Mltna</name>
</gene>
<proteinExistence type="evidence at protein level"/>
<evidence type="ECO:0000250" key="1"/>
<evidence type="ECO:0000255" key="2"/>
<evidence type="ECO:0000255" key="3">
    <source>
        <dbReference type="PROSITE-ProRule" id="PRU00068"/>
    </source>
</evidence>
<evidence type="ECO:0000255" key="4">
    <source>
        <dbReference type="PROSITE-ProRule" id="PRU00076"/>
    </source>
</evidence>
<evidence type="ECO:0000255" key="5">
    <source>
        <dbReference type="PROSITE-ProRule" id="PRU00276"/>
    </source>
</evidence>
<evidence type="ECO:0000255" key="6">
    <source>
        <dbReference type="PROSITE-ProRule" id="PRU10095"/>
    </source>
</evidence>
<evidence type="ECO:0000256" key="7">
    <source>
        <dbReference type="SAM" id="MobiDB-lite"/>
    </source>
</evidence>
<evidence type="ECO:0000269" key="8">
    <source>
    </source>
</evidence>
<evidence type="ECO:0000305" key="9"/>
<evidence type="ECO:0000305" key="10">
    <source>
    </source>
</evidence>
<organism>
    <name type="scientific">Mus musculus</name>
    <name type="common">Mouse</name>
    <dbReference type="NCBI Taxonomy" id="10090"/>
    <lineage>
        <taxon>Eukaryota</taxon>
        <taxon>Metazoa</taxon>
        <taxon>Chordata</taxon>
        <taxon>Craniata</taxon>
        <taxon>Vertebrata</taxon>
        <taxon>Euteleostomi</taxon>
        <taxon>Mammalia</taxon>
        <taxon>Eutheria</taxon>
        <taxon>Euarchontoglires</taxon>
        <taxon>Glires</taxon>
        <taxon>Rodentia</taxon>
        <taxon>Myomorpha</taxon>
        <taxon>Muroidea</taxon>
        <taxon>Muridae</taxon>
        <taxon>Murinae</taxon>
        <taxon>Mus</taxon>
        <taxon>Mus</taxon>
    </lineage>
</organism>
<keyword id="KW-0130">Cell adhesion</keyword>
<keyword id="KW-0165">Cleavage on pair of basic residues</keyword>
<keyword id="KW-1015">Disulfide bond</keyword>
<keyword id="KW-0245">EGF-like domain</keyword>
<keyword id="KW-0325">Glycoprotein</keyword>
<keyword id="KW-0378">Hydrolase</keyword>
<keyword id="KW-0472">Membrane</keyword>
<keyword id="KW-0479">Metal-binding</keyword>
<keyword id="KW-0482">Metalloprotease</keyword>
<keyword id="KW-0597">Phosphoprotein</keyword>
<keyword id="KW-0645">Protease</keyword>
<keyword id="KW-1185">Reference proteome</keyword>
<keyword id="KW-0729">SH3-binding</keyword>
<keyword id="KW-0732">Signal</keyword>
<keyword id="KW-0812">Transmembrane</keyword>
<keyword id="KW-1133">Transmembrane helix</keyword>
<keyword id="KW-0862">Zinc</keyword>
<keyword id="KW-0865">Zymogen</keyword>
<name>ADA12_MOUSE</name>
<comment type="function">
    <text>Involved in skeletal muscle regeneration, specifically at the onset of cell fusion. Also involved in macrophage-derived giant cells (MGC) and osteoclast formation from mononuclear precursors.</text>
</comment>
<comment type="cofactor">
    <cofactor evidence="1">
        <name>Zn(2+)</name>
        <dbReference type="ChEBI" id="CHEBI:29105"/>
    </cofactor>
    <text evidence="1">Binds 1 zinc ion per subunit.</text>
</comment>
<comment type="subunit">
    <text evidence="1">Interacts with alpha-actinin-2 and with syndecans. Interacts with SH3PXD2A. Interacts with FST3. Interacts with RACK1; the interaction is required for PKC-dependent translocation of ADAM12 to the cell membrane (By similarity).</text>
</comment>
<comment type="interaction">
    <interactant intactId="EBI-77785">
        <id>Q61824</id>
    </interactant>
    <interactant intactId="EBI-77797">
        <id>P35609</id>
        <label>ACTN2</label>
    </interactant>
    <organismsDiffer>true</organismsDiffer>
    <experiments>3</experiments>
</comment>
<comment type="subcellular location">
    <subcellularLocation>
        <location>Membrane</location>
        <topology>Single-pass type I membrane protein</topology>
    </subcellularLocation>
</comment>
<comment type="tissue specificity">
    <text evidence="8">Expressed during early developing mesenchymal cells that give rise to skeletal muscle, bones and visceral organs. Not expressed in adult normal muscle but expressed in regenerating muscle.</text>
</comment>
<comment type="induction">
    <text>At the onset of myoblast fusion.</text>
</comment>
<comment type="domain">
    <text>The first 30 amino acids of the cytoplasmic domain contain a major binding site to alpha-actinin-2. This interaction is necessary to promote muscle cell fusion.</text>
</comment>
<comment type="domain">
    <text evidence="1">The cysteine-rich domain supports cell adhesion through syndecans and triggers signaling events that lead to beta-1 integrin-dependent cell spreading. In carcinoma cells the binding of this domain to syndecans does not allow the integrin-mediated cell spreading (By similarity).</text>
</comment>
<comment type="domain">
    <text>The conserved cysteine present in the cysteine-switch motif binds the catalytic zinc ion, thus inhibiting the enzyme. The dissociation of the cysteine from the zinc ion upon the activation-peptide release activates the enzyme.</text>
</comment>
<comment type="PTM">
    <text evidence="1">The precursor is cleaved by a furin endopeptidase.</text>
</comment>
<comment type="miscellaneous">
    <text>Marker of skeletal muscle regeneration.</text>
</comment>
<accession>Q61824</accession>
<accession>F8VQN4</accession>